<reference key="1">
    <citation type="journal article" date="2009" name="Appl. Environ. Microbiol.">
        <title>Three genomes from the phylum Acidobacteria provide insight into the lifestyles of these microorganisms in soils.</title>
        <authorList>
            <person name="Ward N.L."/>
            <person name="Challacombe J.F."/>
            <person name="Janssen P.H."/>
            <person name="Henrissat B."/>
            <person name="Coutinho P.M."/>
            <person name="Wu M."/>
            <person name="Xie G."/>
            <person name="Haft D.H."/>
            <person name="Sait M."/>
            <person name="Badger J."/>
            <person name="Barabote R.D."/>
            <person name="Bradley B."/>
            <person name="Brettin T.S."/>
            <person name="Brinkac L.M."/>
            <person name="Bruce D."/>
            <person name="Creasy T."/>
            <person name="Daugherty S.C."/>
            <person name="Davidsen T.M."/>
            <person name="DeBoy R.T."/>
            <person name="Detter J.C."/>
            <person name="Dodson R.J."/>
            <person name="Durkin A.S."/>
            <person name="Ganapathy A."/>
            <person name="Gwinn-Giglio M."/>
            <person name="Han C.S."/>
            <person name="Khouri H."/>
            <person name="Kiss H."/>
            <person name="Kothari S.P."/>
            <person name="Madupu R."/>
            <person name="Nelson K.E."/>
            <person name="Nelson W.C."/>
            <person name="Paulsen I."/>
            <person name="Penn K."/>
            <person name="Ren Q."/>
            <person name="Rosovitz M.J."/>
            <person name="Selengut J.D."/>
            <person name="Shrivastava S."/>
            <person name="Sullivan S.A."/>
            <person name="Tapia R."/>
            <person name="Thompson L.S."/>
            <person name="Watkins K.L."/>
            <person name="Yang Q."/>
            <person name="Yu C."/>
            <person name="Zafar N."/>
            <person name="Zhou L."/>
            <person name="Kuske C.R."/>
        </authorList>
    </citation>
    <scope>NUCLEOTIDE SEQUENCE [LARGE SCALE GENOMIC DNA]</scope>
    <source>
        <strain>Ellin6076</strain>
    </source>
</reference>
<keyword id="KW-0004">4Fe-4S</keyword>
<keyword id="KW-0997">Cell inner membrane</keyword>
<keyword id="KW-1003">Cell membrane</keyword>
<keyword id="KW-0408">Iron</keyword>
<keyword id="KW-0411">Iron-sulfur</keyword>
<keyword id="KW-0472">Membrane</keyword>
<keyword id="KW-0479">Metal-binding</keyword>
<keyword id="KW-0520">NAD</keyword>
<keyword id="KW-0874">Quinone</keyword>
<keyword id="KW-0677">Repeat</keyword>
<keyword id="KW-1278">Translocase</keyword>
<keyword id="KW-0830">Ubiquinone</keyword>
<comment type="function">
    <text evidence="1">NDH-1 shuttles electrons from NADH, via FMN and iron-sulfur (Fe-S) centers, to quinones in the respiratory chain. The immediate electron acceptor for the enzyme in this species is believed to be ubiquinone. Couples the redox reaction to proton translocation (for every two electrons transferred, four hydrogen ions are translocated across the cytoplasmic membrane), and thus conserves the redox energy in a proton gradient.</text>
</comment>
<comment type="catalytic activity">
    <reaction evidence="1">
        <text>a quinone + NADH + 5 H(+)(in) = a quinol + NAD(+) + 4 H(+)(out)</text>
        <dbReference type="Rhea" id="RHEA:57888"/>
        <dbReference type="ChEBI" id="CHEBI:15378"/>
        <dbReference type="ChEBI" id="CHEBI:24646"/>
        <dbReference type="ChEBI" id="CHEBI:57540"/>
        <dbReference type="ChEBI" id="CHEBI:57945"/>
        <dbReference type="ChEBI" id="CHEBI:132124"/>
    </reaction>
</comment>
<comment type="cofactor">
    <cofactor evidence="1">
        <name>[4Fe-4S] cluster</name>
        <dbReference type="ChEBI" id="CHEBI:49883"/>
    </cofactor>
    <text evidence="1">Binds 2 [4Fe-4S] clusters per subunit.</text>
</comment>
<comment type="subunit">
    <text evidence="1">NDH-1 is composed of 14 different subunits. Subunits NuoA, H, J, K, L, M, N constitute the membrane sector of the complex.</text>
</comment>
<comment type="subcellular location">
    <subcellularLocation>
        <location evidence="1">Cell inner membrane</location>
        <topology evidence="1">Peripheral membrane protein</topology>
    </subcellularLocation>
</comment>
<comment type="similarity">
    <text evidence="1">Belongs to the complex I 23 kDa subunit family.</text>
</comment>
<protein>
    <recommendedName>
        <fullName evidence="1">NADH-quinone oxidoreductase subunit I 2</fullName>
        <ecNumber evidence="1">7.1.1.-</ecNumber>
    </recommendedName>
    <alternativeName>
        <fullName evidence="1">NADH dehydrogenase I subunit I 2</fullName>
    </alternativeName>
    <alternativeName>
        <fullName evidence="1">NDH-1 subunit I 2</fullName>
    </alternativeName>
</protein>
<dbReference type="EC" id="7.1.1.-" evidence="1"/>
<dbReference type="EMBL" id="CP000473">
    <property type="protein sequence ID" value="ABJ86632.1"/>
    <property type="molecule type" value="Genomic_DNA"/>
</dbReference>
<dbReference type="SMR" id="Q01UN8"/>
<dbReference type="STRING" id="234267.Acid_5685"/>
<dbReference type="KEGG" id="sus:Acid_5685"/>
<dbReference type="eggNOG" id="COG1143">
    <property type="taxonomic scope" value="Bacteria"/>
</dbReference>
<dbReference type="HOGENOM" id="CLU_067218_4_3_0"/>
<dbReference type="InParanoid" id="Q01UN8"/>
<dbReference type="OrthoDB" id="9803192at2"/>
<dbReference type="GO" id="GO:0005886">
    <property type="term" value="C:plasma membrane"/>
    <property type="evidence" value="ECO:0007669"/>
    <property type="project" value="UniProtKB-SubCell"/>
</dbReference>
<dbReference type="GO" id="GO:0051539">
    <property type="term" value="F:4 iron, 4 sulfur cluster binding"/>
    <property type="evidence" value="ECO:0007669"/>
    <property type="project" value="UniProtKB-KW"/>
</dbReference>
<dbReference type="GO" id="GO:0005506">
    <property type="term" value="F:iron ion binding"/>
    <property type="evidence" value="ECO:0007669"/>
    <property type="project" value="UniProtKB-UniRule"/>
</dbReference>
<dbReference type="GO" id="GO:0050136">
    <property type="term" value="F:NADH:ubiquinone reductase (non-electrogenic) activity"/>
    <property type="evidence" value="ECO:0007669"/>
    <property type="project" value="UniProtKB-UniRule"/>
</dbReference>
<dbReference type="GO" id="GO:0048038">
    <property type="term" value="F:quinone binding"/>
    <property type="evidence" value="ECO:0007669"/>
    <property type="project" value="UniProtKB-KW"/>
</dbReference>
<dbReference type="Gene3D" id="3.30.70.3270">
    <property type="match status" value="1"/>
</dbReference>
<dbReference type="HAMAP" id="MF_01351">
    <property type="entry name" value="NDH1_NuoI"/>
    <property type="match status" value="1"/>
</dbReference>
<dbReference type="InterPro" id="IPR017896">
    <property type="entry name" value="4Fe4S_Fe-S-bd"/>
</dbReference>
<dbReference type="InterPro" id="IPR017900">
    <property type="entry name" value="4Fe4S_Fe_S_CS"/>
</dbReference>
<dbReference type="InterPro" id="IPR010226">
    <property type="entry name" value="NADH_quinone_OxRdtase_chainI"/>
</dbReference>
<dbReference type="NCBIfam" id="TIGR01971">
    <property type="entry name" value="NuoI"/>
    <property type="match status" value="1"/>
</dbReference>
<dbReference type="PANTHER" id="PTHR10849">
    <property type="entry name" value="NADH DEHYDROGENASE UBIQUINONE IRON-SULFUR PROTEIN 8, MITOCHONDRIAL"/>
    <property type="match status" value="1"/>
</dbReference>
<dbReference type="PANTHER" id="PTHR10849:SF24">
    <property type="entry name" value="NADH-QUINONE OXIDOREDUCTASE SUBUNIT I 2"/>
    <property type="match status" value="1"/>
</dbReference>
<dbReference type="Pfam" id="PF12838">
    <property type="entry name" value="Fer4_7"/>
    <property type="match status" value="1"/>
</dbReference>
<dbReference type="SUPFAM" id="SSF54862">
    <property type="entry name" value="4Fe-4S ferredoxins"/>
    <property type="match status" value="1"/>
</dbReference>
<dbReference type="PROSITE" id="PS00198">
    <property type="entry name" value="4FE4S_FER_1"/>
    <property type="match status" value="2"/>
</dbReference>
<dbReference type="PROSITE" id="PS51379">
    <property type="entry name" value="4FE4S_FER_2"/>
    <property type="match status" value="2"/>
</dbReference>
<accession>Q01UN8</accession>
<evidence type="ECO:0000255" key="1">
    <source>
        <dbReference type="HAMAP-Rule" id="MF_01351"/>
    </source>
</evidence>
<name>NUOI2_SOLUE</name>
<gene>
    <name evidence="1" type="primary">nuoI2</name>
    <name type="ordered locus">Acid_5685</name>
</gene>
<organism>
    <name type="scientific">Solibacter usitatus (strain Ellin6076)</name>
    <dbReference type="NCBI Taxonomy" id="234267"/>
    <lineage>
        <taxon>Bacteria</taxon>
        <taxon>Pseudomonadati</taxon>
        <taxon>Acidobacteriota</taxon>
        <taxon>Terriglobia</taxon>
        <taxon>Bryobacterales</taxon>
        <taxon>Solibacteraceae</taxon>
        <taxon>Candidatus Solibacter</taxon>
    </lineage>
</organism>
<sequence>MIELLKKIFLVDLFQGLFVTFRNQNPKYIYTEQYPAERPKVAERYRGAPRLNINPDNGETLCISCNLCALACPENLIVVTSERSEVTKRKELVTFTYDTSRCMFCGLCEDACPVDALELTQDFEMASYTREGQIWDRQALEEGPRPTQYKC</sequence>
<feature type="chain" id="PRO_0000298549" description="NADH-quinone oxidoreductase subunit I 2">
    <location>
        <begin position="1"/>
        <end position="151"/>
    </location>
</feature>
<feature type="domain" description="4Fe-4S ferredoxin-type 1" evidence="1">
    <location>
        <begin position="49"/>
        <end position="82"/>
    </location>
</feature>
<feature type="domain" description="4Fe-4S ferredoxin-type 2" evidence="1">
    <location>
        <begin position="93"/>
        <end position="122"/>
    </location>
</feature>
<feature type="binding site" evidence="1">
    <location>
        <position position="62"/>
    </location>
    <ligand>
        <name>[4Fe-4S] cluster</name>
        <dbReference type="ChEBI" id="CHEBI:49883"/>
        <label>1</label>
    </ligand>
</feature>
<feature type="binding site" evidence="1">
    <location>
        <position position="65"/>
    </location>
    <ligand>
        <name>[4Fe-4S] cluster</name>
        <dbReference type="ChEBI" id="CHEBI:49883"/>
        <label>1</label>
    </ligand>
</feature>
<feature type="binding site" evidence="1">
    <location>
        <position position="68"/>
    </location>
    <ligand>
        <name>[4Fe-4S] cluster</name>
        <dbReference type="ChEBI" id="CHEBI:49883"/>
        <label>1</label>
    </ligand>
</feature>
<feature type="binding site" evidence="1">
    <location>
        <position position="72"/>
    </location>
    <ligand>
        <name>[4Fe-4S] cluster</name>
        <dbReference type="ChEBI" id="CHEBI:49883"/>
        <label>2</label>
    </ligand>
</feature>
<feature type="binding site" evidence="1">
    <location>
        <position position="102"/>
    </location>
    <ligand>
        <name>[4Fe-4S] cluster</name>
        <dbReference type="ChEBI" id="CHEBI:49883"/>
        <label>2</label>
    </ligand>
</feature>
<feature type="binding site" evidence="1">
    <location>
        <position position="105"/>
    </location>
    <ligand>
        <name>[4Fe-4S] cluster</name>
        <dbReference type="ChEBI" id="CHEBI:49883"/>
        <label>2</label>
    </ligand>
</feature>
<feature type="binding site" evidence="1">
    <location>
        <position position="108"/>
    </location>
    <ligand>
        <name>[4Fe-4S] cluster</name>
        <dbReference type="ChEBI" id="CHEBI:49883"/>
        <label>2</label>
    </ligand>
</feature>
<feature type="binding site" evidence="1">
    <location>
        <position position="112"/>
    </location>
    <ligand>
        <name>[4Fe-4S] cluster</name>
        <dbReference type="ChEBI" id="CHEBI:49883"/>
        <label>1</label>
    </ligand>
</feature>
<proteinExistence type="inferred from homology"/>